<proteinExistence type="inferred from homology"/>
<dbReference type="EC" id="2.1.1.257" evidence="1"/>
<dbReference type="EMBL" id="CP000743">
    <property type="protein sequence ID" value="ABR56253.1"/>
    <property type="molecule type" value="Genomic_DNA"/>
</dbReference>
<dbReference type="RefSeq" id="WP_011973385.1">
    <property type="nucleotide sequence ID" value="NC_009635.1"/>
</dbReference>
<dbReference type="SMR" id="A6UUT1"/>
<dbReference type="STRING" id="419665.Maeo_0669"/>
<dbReference type="GeneID" id="5327197"/>
<dbReference type="GeneID" id="75305742"/>
<dbReference type="KEGG" id="mae:Maeo_0669"/>
<dbReference type="eggNOG" id="arCOG01239">
    <property type="taxonomic scope" value="Archaea"/>
</dbReference>
<dbReference type="HOGENOM" id="CLU_107018_0_0_2"/>
<dbReference type="OrthoDB" id="27492at2157"/>
<dbReference type="Proteomes" id="UP000001106">
    <property type="component" value="Chromosome"/>
</dbReference>
<dbReference type="GO" id="GO:0005737">
    <property type="term" value="C:cytoplasm"/>
    <property type="evidence" value="ECO:0007669"/>
    <property type="project" value="UniProtKB-SubCell"/>
</dbReference>
<dbReference type="GO" id="GO:0008757">
    <property type="term" value="F:S-adenosylmethionine-dependent methyltransferase activity"/>
    <property type="evidence" value="ECO:0007669"/>
    <property type="project" value="UniProtKB-UniRule"/>
</dbReference>
<dbReference type="GO" id="GO:0008175">
    <property type="term" value="F:tRNA methyltransferase activity"/>
    <property type="evidence" value="ECO:0007669"/>
    <property type="project" value="UniProtKB-UniRule"/>
</dbReference>
<dbReference type="GO" id="GO:0030488">
    <property type="term" value="P:tRNA methylation"/>
    <property type="evidence" value="ECO:0007669"/>
    <property type="project" value="UniProtKB-UniRule"/>
</dbReference>
<dbReference type="CDD" id="cd18087">
    <property type="entry name" value="TrmY-like"/>
    <property type="match status" value="1"/>
</dbReference>
<dbReference type="Gene3D" id="3.40.1280.10">
    <property type="match status" value="1"/>
</dbReference>
<dbReference type="HAMAP" id="MF_00587">
    <property type="entry name" value="tRNA_methyltr_TrmY"/>
    <property type="match status" value="1"/>
</dbReference>
<dbReference type="InterPro" id="IPR029028">
    <property type="entry name" value="Alpha/beta_knot_MTases"/>
</dbReference>
<dbReference type="InterPro" id="IPR007158">
    <property type="entry name" value="TrmY"/>
</dbReference>
<dbReference type="InterPro" id="IPR029026">
    <property type="entry name" value="tRNA_m1G_MTases_N"/>
</dbReference>
<dbReference type="NCBIfam" id="NF002560">
    <property type="entry name" value="PRK02135.1"/>
    <property type="match status" value="1"/>
</dbReference>
<dbReference type="PANTHER" id="PTHR40703">
    <property type="entry name" value="TRNA (PSEUDOURIDINE(54)-N(1))-METHYLTRANSFERASE"/>
    <property type="match status" value="1"/>
</dbReference>
<dbReference type="PANTHER" id="PTHR40703:SF1">
    <property type="entry name" value="TRNA (PSEUDOURIDINE(54)-N(1))-METHYLTRANSFERASE"/>
    <property type="match status" value="1"/>
</dbReference>
<dbReference type="Pfam" id="PF04013">
    <property type="entry name" value="Methyltrn_RNA_2"/>
    <property type="match status" value="1"/>
</dbReference>
<dbReference type="SUPFAM" id="SSF75217">
    <property type="entry name" value="alpha/beta knot"/>
    <property type="match status" value="1"/>
</dbReference>
<feature type="chain" id="PRO_1000025464" description="tRNA (pseudouridine(54)-N(1))-methyltransferase">
    <location>
        <begin position="1"/>
        <end position="204"/>
    </location>
</feature>
<feature type="binding site" evidence="1">
    <location>
        <position position="130"/>
    </location>
    <ligand>
        <name>S-adenosyl-L-methionine</name>
        <dbReference type="ChEBI" id="CHEBI:59789"/>
    </ligand>
</feature>
<feature type="binding site" evidence="1">
    <location>
        <position position="157"/>
    </location>
    <ligand>
        <name>S-adenosyl-L-methionine</name>
        <dbReference type="ChEBI" id="CHEBI:59789"/>
    </ligand>
</feature>
<feature type="binding site" evidence="1">
    <location>
        <begin position="180"/>
        <end position="185"/>
    </location>
    <ligand>
        <name>S-adenosyl-L-methionine</name>
        <dbReference type="ChEBI" id="CHEBI:59789"/>
    </ligand>
</feature>
<feature type="binding site" evidence="1">
    <location>
        <position position="190"/>
    </location>
    <ligand>
        <name>S-adenosyl-L-methionine</name>
        <dbReference type="ChEBI" id="CHEBI:59789"/>
    </ligand>
</feature>
<name>TRMY_META3</name>
<comment type="function">
    <text evidence="1">Specifically catalyzes the N1-methylation of pseudouridine at position 54 (Psi54) in tRNAs.</text>
</comment>
<comment type="catalytic activity">
    <reaction evidence="1">
        <text>pseudouridine(54) in tRNA + S-adenosyl-L-methionine = N(1)-methylpseudouridine(54) in tRNA + S-adenosyl-L-homocysteine + H(+)</text>
        <dbReference type="Rhea" id="RHEA:55292"/>
        <dbReference type="Rhea" id="RHEA-COMP:14140"/>
        <dbReference type="Rhea" id="RHEA-COMP:14141"/>
        <dbReference type="ChEBI" id="CHEBI:15378"/>
        <dbReference type="ChEBI" id="CHEBI:57856"/>
        <dbReference type="ChEBI" id="CHEBI:59789"/>
        <dbReference type="ChEBI" id="CHEBI:65314"/>
        <dbReference type="ChEBI" id="CHEBI:74890"/>
        <dbReference type="EC" id="2.1.1.257"/>
    </reaction>
</comment>
<comment type="subunit">
    <text evidence="1">Homodimer.</text>
</comment>
<comment type="subcellular location">
    <subcellularLocation>
        <location evidence="1">Cytoplasm</location>
    </subcellularLocation>
</comment>
<comment type="similarity">
    <text evidence="1">Belongs to the methyltransferase superfamily. TrmY family.</text>
</comment>
<organism>
    <name type="scientific">Methanococcus aeolicus (strain ATCC BAA-1280 / DSM 17508 / OCM 812 / Nankai-3)</name>
    <dbReference type="NCBI Taxonomy" id="419665"/>
    <lineage>
        <taxon>Archaea</taxon>
        <taxon>Methanobacteriati</taxon>
        <taxon>Methanobacteriota</taxon>
        <taxon>Methanomada group</taxon>
        <taxon>Methanococci</taxon>
        <taxon>Methanococcales</taxon>
        <taxon>Methanococcaceae</taxon>
        <taxon>Methanococcus</taxon>
    </lineage>
</organism>
<protein>
    <recommendedName>
        <fullName evidence="1">tRNA (pseudouridine(54)-N(1))-methyltransferase</fullName>
        <ecNumber evidence="1">2.1.1.257</ecNumber>
    </recommendedName>
</protein>
<gene>
    <name evidence="1" type="primary">trmY</name>
    <name type="ordered locus">Maeo_0669</name>
</gene>
<evidence type="ECO:0000255" key="1">
    <source>
        <dbReference type="HAMAP-Rule" id="MF_00587"/>
    </source>
</evidence>
<accession>A6UUT1</accession>
<reference key="1">
    <citation type="submission" date="2007-06" db="EMBL/GenBank/DDBJ databases">
        <title>Complete sequence of Methanococcus aeolicus Nankai-3.</title>
        <authorList>
            <consortium name="US DOE Joint Genome Institute"/>
            <person name="Copeland A."/>
            <person name="Lucas S."/>
            <person name="Lapidus A."/>
            <person name="Barry K."/>
            <person name="Glavina del Rio T."/>
            <person name="Dalin E."/>
            <person name="Tice H."/>
            <person name="Pitluck S."/>
            <person name="Chain P."/>
            <person name="Malfatti S."/>
            <person name="Shin M."/>
            <person name="Vergez L."/>
            <person name="Schmutz J."/>
            <person name="Larimer F."/>
            <person name="Land M."/>
            <person name="Hauser L."/>
            <person name="Kyrpides N."/>
            <person name="Lykidis A."/>
            <person name="Sieprawska-Lupa M."/>
            <person name="Whitman W.B."/>
            <person name="Richardson P."/>
        </authorList>
    </citation>
    <scope>NUCLEOTIDE SEQUENCE [LARGE SCALE GENOMIC DNA]</scope>
    <source>
        <strain>ATCC BAA-1280 / DSM 17508 / OCM 812 / Nankai-3</strain>
    </source>
</reference>
<sequence length="204" mass="23079">MIEFIFKANKSITNGEINLKDLPGSSGRMDLVCRCVSSAFFLSHDLRRDTIFYSVHYGAPNPPVAIKFVGSELKRVSPDERSIALFIKKALDKSPMQLWKESTSGIYIAKKEFKDIILEKKNEGKEIYYLHKDGEDIENIFNKENNAENKNIVFILGDHIGIGEEDEKFLEDIGALKVSLSPLELHANHCITIVHNALDKAKLK</sequence>
<keyword id="KW-0963">Cytoplasm</keyword>
<keyword id="KW-0489">Methyltransferase</keyword>
<keyword id="KW-0949">S-adenosyl-L-methionine</keyword>
<keyword id="KW-0808">Transferase</keyword>
<keyword id="KW-0819">tRNA processing</keyword>